<evidence type="ECO:0000305" key="1"/>
<protein>
    <recommendedName>
        <fullName>Uncharacterized PPE family protein PPE28</fullName>
    </recommendedName>
</protein>
<accession>P9WI11</accession>
<accession>L0T9A6</accession>
<accession>Q79FK2</accession>
<accession>Q7D7Y0</accession>
<feature type="chain" id="PRO_0000379111" description="Uncharacterized PPE family protein PPE28">
    <location>
        <begin position="1"/>
        <end position="655"/>
    </location>
</feature>
<feature type="domain" description="PE-PPE" evidence="1">
    <location>
        <begin position="245"/>
        <end position="469"/>
    </location>
</feature>
<proteinExistence type="inferred from homology"/>
<organism>
    <name type="scientific">Mycobacterium tuberculosis (strain ATCC 25618 / H37Rv)</name>
    <dbReference type="NCBI Taxonomy" id="83332"/>
    <lineage>
        <taxon>Bacteria</taxon>
        <taxon>Bacillati</taxon>
        <taxon>Actinomycetota</taxon>
        <taxon>Actinomycetes</taxon>
        <taxon>Mycobacteriales</taxon>
        <taxon>Mycobacteriaceae</taxon>
        <taxon>Mycobacterium</taxon>
        <taxon>Mycobacterium tuberculosis complex</taxon>
    </lineage>
</organism>
<gene>
    <name type="primary">PPE28</name>
    <name type="ordered locus">Rv1800</name>
</gene>
<keyword id="KW-1185">Reference proteome</keyword>
<comment type="similarity">
    <text evidence="1">Belongs to the mycobacterial PPE family.</text>
</comment>
<sequence>MLPNFAVLPPEVNSARVFAGAGSAPMLAAAAAWDDLASELHCAAMSFGSVTSGLVVGWWQGSASAAMVDAAASYIGWLSTSAAHAEGAAGLARAAVSVFEEALAATVHPAMVAANRAQVASLVASNLFGQNAPAIAALESLYECMWAQDAAAMAGYYVGASAVATQLASWLQRLQSIPGAASLDARLPSSAEAPMGVVRAVNSAIAANAAAAQTVGLVMGGSGTPIPSARYVELANALYMSGSVPGVIAQALFTPQGLYPVVVIKNLTFDSSVAQGAVILESAIRQQIAAGNNVTVFGYSQSATISSLVMANLAASADPPSPDELSFTLIGNPNNPNGGVATRFPGISFPSLGVTATGATPHNLYPTKIYTIEYDGVADFPRYPLNFVSTLNAIAGTYYVHSNYFILTPEQIDAAVPLTNTVGPTMTQYYIIRTENLPLLEPLRSVPIVGNPLANLVQPNLKVIVNLGYGDPAYGYSTSPPNVATPFGLFPEVSPVVIADALVAGTQQGIGDFAYDVSHLELPLPADGSTMPSTAPGSGTPVPPLSIDSLIDDLQVANRNLANTISKVAATSYATVLPTADIANAALTIVPSYNIHLFLEGIQQALKGDPMGLVNAVGYPLAADVALFTAAGGLQLLIIISAGRTIANDISAIVP</sequence>
<reference key="1">
    <citation type="journal article" date="1998" name="Nature">
        <title>Deciphering the biology of Mycobacterium tuberculosis from the complete genome sequence.</title>
        <authorList>
            <person name="Cole S.T."/>
            <person name="Brosch R."/>
            <person name="Parkhill J."/>
            <person name="Garnier T."/>
            <person name="Churcher C.M."/>
            <person name="Harris D.E."/>
            <person name="Gordon S.V."/>
            <person name="Eiglmeier K."/>
            <person name="Gas S."/>
            <person name="Barry C.E. III"/>
            <person name="Tekaia F."/>
            <person name="Badcock K."/>
            <person name="Basham D."/>
            <person name="Brown D."/>
            <person name="Chillingworth T."/>
            <person name="Connor R."/>
            <person name="Davies R.M."/>
            <person name="Devlin K."/>
            <person name="Feltwell T."/>
            <person name="Gentles S."/>
            <person name="Hamlin N."/>
            <person name="Holroyd S."/>
            <person name="Hornsby T."/>
            <person name="Jagels K."/>
            <person name="Krogh A."/>
            <person name="McLean J."/>
            <person name="Moule S."/>
            <person name="Murphy L.D."/>
            <person name="Oliver S."/>
            <person name="Osborne J."/>
            <person name="Quail M.A."/>
            <person name="Rajandream M.A."/>
            <person name="Rogers J."/>
            <person name="Rutter S."/>
            <person name="Seeger K."/>
            <person name="Skelton S."/>
            <person name="Squares S."/>
            <person name="Squares R."/>
            <person name="Sulston J.E."/>
            <person name="Taylor K."/>
            <person name="Whitehead S."/>
            <person name="Barrell B.G."/>
        </authorList>
    </citation>
    <scope>NUCLEOTIDE SEQUENCE [LARGE SCALE GENOMIC DNA]</scope>
    <source>
        <strain>ATCC 25618 / H37Rv</strain>
    </source>
</reference>
<name>PPE28_MYCTU</name>
<dbReference type="EMBL" id="AL123456">
    <property type="protein sequence ID" value="CCP44566.1"/>
    <property type="molecule type" value="Genomic_DNA"/>
</dbReference>
<dbReference type="PIR" id="A70931">
    <property type="entry name" value="A70931"/>
</dbReference>
<dbReference type="RefSeq" id="WP_003901256.1">
    <property type="nucleotide sequence ID" value="NZ_NVQJ01000037.1"/>
</dbReference>
<dbReference type="RefSeq" id="YP_177839.1">
    <property type="nucleotide sequence ID" value="NC_000962.3"/>
</dbReference>
<dbReference type="SMR" id="P9WI11"/>
<dbReference type="STRING" id="83332.Rv1800"/>
<dbReference type="ESTHER" id="myctu-Rv1800">
    <property type="family name" value="PE-PPE"/>
</dbReference>
<dbReference type="PaxDb" id="83332-Rv1800"/>
<dbReference type="DNASU" id="885465"/>
<dbReference type="GeneID" id="885465"/>
<dbReference type="KEGG" id="mtu:Rv1800"/>
<dbReference type="KEGG" id="mtv:RVBD_1800"/>
<dbReference type="TubercuList" id="Rv1800"/>
<dbReference type="eggNOG" id="COG5651">
    <property type="taxonomic scope" value="Bacteria"/>
</dbReference>
<dbReference type="InParanoid" id="P9WI11"/>
<dbReference type="OrthoDB" id="4568361at2"/>
<dbReference type="PhylomeDB" id="P9WI11"/>
<dbReference type="Proteomes" id="UP000001584">
    <property type="component" value="Chromosome"/>
</dbReference>
<dbReference type="GO" id="GO:0052572">
    <property type="term" value="P:response to host immune response"/>
    <property type="evidence" value="ECO:0000318"/>
    <property type="project" value="GO_Central"/>
</dbReference>
<dbReference type="FunFam" id="1.20.1260.20:FF:000001">
    <property type="entry name" value="PPE family protein PPE41"/>
    <property type="match status" value="1"/>
</dbReference>
<dbReference type="Gene3D" id="3.40.50.1820">
    <property type="entry name" value="alpha/beta hydrolase"/>
    <property type="match status" value="1"/>
</dbReference>
<dbReference type="Gene3D" id="1.20.1260.20">
    <property type="entry name" value="PPE superfamily"/>
    <property type="match status" value="1"/>
</dbReference>
<dbReference type="InterPro" id="IPR029058">
    <property type="entry name" value="AB_hydrolase_fold"/>
</dbReference>
<dbReference type="InterPro" id="IPR013228">
    <property type="entry name" value="PE-PPE_C"/>
</dbReference>
<dbReference type="InterPro" id="IPR000030">
    <property type="entry name" value="PPE_dom"/>
</dbReference>
<dbReference type="InterPro" id="IPR038332">
    <property type="entry name" value="PPE_sf"/>
</dbReference>
<dbReference type="PANTHER" id="PTHR46766">
    <property type="entry name" value="GLUTAMINE-RICH PROTEIN 2"/>
    <property type="match status" value="1"/>
</dbReference>
<dbReference type="PANTHER" id="PTHR46766:SF1">
    <property type="entry name" value="GLUTAMINE-RICH PROTEIN 2"/>
    <property type="match status" value="1"/>
</dbReference>
<dbReference type="Pfam" id="PF08237">
    <property type="entry name" value="PE-PPE"/>
    <property type="match status" value="1"/>
</dbReference>
<dbReference type="Pfam" id="PF00823">
    <property type="entry name" value="PPE"/>
    <property type="match status" value="1"/>
</dbReference>
<dbReference type="SUPFAM" id="SSF53474">
    <property type="entry name" value="alpha/beta-Hydrolases"/>
    <property type="match status" value="1"/>
</dbReference>
<dbReference type="SUPFAM" id="SSF140459">
    <property type="entry name" value="PE/PPE dimer-like"/>
    <property type="match status" value="1"/>
</dbReference>